<protein>
    <recommendedName>
        <fullName>Regulatory protein SWI6</fullName>
    </recommendedName>
    <alternativeName>
        <fullName>Cell-cycle box factor subunit SWI6</fullName>
    </alternativeName>
    <alternativeName>
        <fullName>MBF subunit P90</fullName>
    </alternativeName>
    <alternativeName>
        <fullName>Trans-acting activator of HO endonuclease gene</fullName>
    </alternativeName>
</protein>
<proteinExistence type="evidence at protein level"/>
<evidence type="ECO:0000256" key="1">
    <source>
        <dbReference type="SAM" id="MobiDB-lite"/>
    </source>
</evidence>
<evidence type="ECO:0000269" key="2">
    <source>
    </source>
</evidence>
<evidence type="ECO:0000269" key="3">
    <source>
    </source>
</evidence>
<evidence type="ECO:0000269" key="4">
    <source>
    </source>
</evidence>
<evidence type="ECO:0000269" key="5">
    <source>
    </source>
</evidence>
<evidence type="ECO:0007744" key="6">
    <source>
    </source>
</evidence>
<evidence type="ECO:0007744" key="7">
    <source>
    </source>
</evidence>
<evidence type="ECO:0007744" key="8">
    <source>
    </source>
</evidence>
<evidence type="ECO:0007744" key="9">
    <source>
    </source>
</evidence>
<evidence type="ECO:0007829" key="10">
    <source>
        <dbReference type="PDB" id="1SW6"/>
    </source>
</evidence>
<evidence type="ECO:0007829" key="11">
    <source>
        <dbReference type="PDB" id="2XFV"/>
    </source>
</evidence>
<comment type="function">
    <text>Part of a complex involved in cell-cycle-dependent transcription. SWI4 and SWI6 are required for formation of the cell-cycle box factor-DNA complex. The repeated element in the upstream region of HO (5'-CACGAAAA-3') is called the cell cycle box (CCB).</text>
</comment>
<comment type="subunit">
    <text evidence="2 5">Component of the transcription complex MCB-binding factor (MBF) composed of SWI6 and MBP1. Component of the transcription complex SCB-binding factor (SBF) composed of SWI6 and SWI4. Interacts with MSA1 and STB1.</text>
</comment>
<comment type="interaction">
    <interactant intactId="EBI-18641">
        <id>P09959</id>
    </interactant>
    <interactant intactId="EBI-4490">
        <id>P13365</id>
        <label>CLN3</label>
    </interactant>
    <organismsDiffer>false</organismsDiffer>
    <experiments>2</experiments>
</comment>
<comment type="interaction">
    <interactant intactId="EBI-18641">
        <id>P09959</id>
    </interactant>
    <interactant intactId="EBI-10485">
        <id>P39678</id>
        <label>MBP1</label>
    </interactant>
    <organismsDiffer>false</organismsDiffer>
    <experiments>5</experiments>
</comment>
<comment type="interaction">
    <interactant intactId="EBI-18641">
        <id>P09959</id>
    </interactant>
    <interactant intactId="EBI-18626">
        <id>P25302</id>
        <label>SWI4</label>
    </interactant>
    <organismsDiffer>false</organismsDiffer>
    <experiments>9</experiments>
</comment>
<comment type="subcellular location">
    <subcellularLocation>
        <location>Nucleus</location>
    </subcellularLocation>
    <subcellularLocation>
        <location>Cytoplasm</location>
    </subcellularLocation>
</comment>
<comment type="PTM">
    <text evidence="4">Phosphorylated by CDC28 and dephosphorylated by CDC14.</text>
</comment>
<comment type="miscellaneous">
    <text evidence="3">Present with 3340 molecules/cell in log phase SD medium.</text>
</comment>
<name>SWI6_YEAST</name>
<sequence>MALEEVVRYLGPHNEIPLTLTRDSETGHFLLKHFLPILQQYHDTGNINETNPDSFPTDEERNKLLAHYGIAVNTDDRGELWIELEKCLQLLNMLNLFGLFQDAFEFEEPETDQDEEDPSHSKLPENKTKSENSKDNISSKRINNLQDMSLDSDAHRELGSPLKKLKIDTSVIDAESDSTPNTARGKPNDDINKGPSGDNENNGTDDNDRTAGPIITFTHDLTSDFLSSPLKIMKALPSPVVNDNEQKMKLEAFLQRLLFPEIQEMPTSLNNDSSNRNSEGGSSNQQQQHVSFDSLLQEVNDAFPNTQLNLNIPVDEHGNTPLHWLTSIANLELVKHLVKHGSNRLYGDNMGESCLVKAVKSVNNYDSGTFEALLDYLYPCLILEDSMNRTILHHIIITSGMTGCSAAAKYYLDILMGWIVKKQNRPIQSGTNEKESKPNDKNGERKDSILENLDLKWIIANMLNAQDSNGDTCLNIAARLGNISIVDALLDYGADPFIANKSGLRPVDFGAGTSKLQNTNGGDENSKMVSKGDYDGQKNGKAKKIRSQLLKNPPETTSLINDVQNLLNSISKDYENETVQYNEKLEKLHKELNEQREELANSREQLANVKQLKDEYSLMQEQLTNLKAGIEEEEESFREESKKLGIIADESSGIDWDSSEYDADEPFKVEFLSDFLEDKLQKNYEGDISKLLEAESKEQIMEQIRNQLPAEKIQSMLPPTVLLKARINAYKRNDKHLTNVLDTISTKQSELENKFRRVLSLCLKIDENKVDNMLDGLLQAISSEDPQDIDTDEMQDFLKKHAS</sequence>
<organism>
    <name type="scientific">Saccharomyces cerevisiae (strain ATCC 204508 / S288c)</name>
    <name type="common">Baker's yeast</name>
    <dbReference type="NCBI Taxonomy" id="559292"/>
    <lineage>
        <taxon>Eukaryota</taxon>
        <taxon>Fungi</taxon>
        <taxon>Dikarya</taxon>
        <taxon>Ascomycota</taxon>
        <taxon>Saccharomycotina</taxon>
        <taxon>Saccharomycetes</taxon>
        <taxon>Saccharomycetales</taxon>
        <taxon>Saccharomycetaceae</taxon>
        <taxon>Saccharomyces</taxon>
    </lineage>
</organism>
<dbReference type="EMBL" id="X06238">
    <property type="protein sequence ID" value="CAA29581.1"/>
    <property type="molecule type" value="Genomic_DNA"/>
</dbReference>
<dbReference type="EMBL" id="U17246">
    <property type="protein sequence ID" value="AAB67460.1"/>
    <property type="molecule type" value="Genomic_DNA"/>
</dbReference>
<dbReference type="EMBL" id="BK006945">
    <property type="protein sequence ID" value="DAA09502.1"/>
    <property type="molecule type" value="Genomic_DNA"/>
</dbReference>
<dbReference type="PIR" id="S03161">
    <property type="entry name" value="RGBYW6"/>
</dbReference>
<dbReference type="RefSeq" id="NP_013283.1">
    <property type="nucleotide sequence ID" value="NM_001182069.1"/>
</dbReference>
<dbReference type="PDB" id="1SW6">
    <property type="method" value="X-ray"/>
    <property type="resolution" value="2.10 A"/>
    <property type="chains" value="A/B=188-512"/>
</dbReference>
<dbReference type="PDB" id="2XFV">
    <property type="method" value="X-ray"/>
    <property type="resolution" value="1.90 A"/>
    <property type="chains" value="A/B=2-126"/>
</dbReference>
<dbReference type="PDB" id="5XW5">
    <property type="method" value="X-ray"/>
    <property type="resolution" value="1.85 A"/>
    <property type="chains" value="C=155-164"/>
</dbReference>
<dbReference type="PDBsum" id="1SW6"/>
<dbReference type="PDBsum" id="2XFV"/>
<dbReference type="PDBsum" id="5XW5"/>
<dbReference type="SMR" id="P09959"/>
<dbReference type="BioGRID" id="31453">
    <property type="interactions" value="748"/>
</dbReference>
<dbReference type="ComplexPortal" id="CPX-946">
    <property type="entry name" value="SBF transcription complex"/>
</dbReference>
<dbReference type="ComplexPortal" id="CPX-950">
    <property type="entry name" value="MBP transcription complex"/>
</dbReference>
<dbReference type="DIP" id="DIP-598N"/>
<dbReference type="ELM" id="P09959"/>
<dbReference type="FunCoup" id="P09959">
    <property type="interactions" value="849"/>
</dbReference>
<dbReference type="IntAct" id="P09959">
    <property type="interactions" value="104"/>
</dbReference>
<dbReference type="MINT" id="P09959"/>
<dbReference type="STRING" id="4932.YLR182W"/>
<dbReference type="CarbonylDB" id="P09959"/>
<dbReference type="iPTMnet" id="P09959"/>
<dbReference type="PaxDb" id="4932-YLR182W"/>
<dbReference type="PeptideAtlas" id="P09959"/>
<dbReference type="EnsemblFungi" id="YLR182W_mRNA">
    <property type="protein sequence ID" value="YLR182W"/>
    <property type="gene ID" value="YLR182W"/>
</dbReference>
<dbReference type="GeneID" id="850879"/>
<dbReference type="KEGG" id="sce:YLR182W"/>
<dbReference type="AGR" id="SGD:S000004172"/>
<dbReference type="SGD" id="S000004172">
    <property type="gene designation" value="SWI6"/>
</dbReference>
<dbReference type="VEuPathDB" id="FungiDB:YLR182W"/>
<dbReference type="eggNOG" id="ENOG502QPWC">
    <property type="taxonomic scope" value="Eukaryota"/>
</dbReference>
<dbReference type="GeneTree" id="ENSGT00940000173997"/>
<dbReference type="HOGENOM" id="CLU_017827_0_0_1"/>
<dbReference type="InParanoid" id="P09959"/>
<dbReference type="OMA" id="DILMGWI"/>
<dbReference type="OrthoDB" id="6718656at2759"/>
<dbReference type="BioCyc" id="YEAST:G3O-32306-MONOMER"/>
<dbReference type="BioGRID-ORCS" id="850879">
    <property type="hits" value="0 hits in 10 CRISPR screens"/>
</dbReference>
<dbReference type="EvolutionaryTrace" id="P09959"/>
<dbReference type="PRO" id="PR:P09959"/>
<dbReference type="Proteomes" id="UP000002311">
    <property type="component" value="Chromosome XII"/>
</dbReference>
<dbReference type="RNAct" id="P09959">
    <property type="molecule type" value="protein"/>
</dbReference>
<dbReference type="GO" id="GO:0005737">
    <property type="term" value="C:cytoplasm"/>
    <property type="evidence" value="ECO:0000314"/>
    <property type="project" value="SGD"/>
</dbReference>
<dbReference type="GO" id="GO:0030907">
    <property type="term" value="C:MBF transcription complex"/>
    <property type="evidence" value="ECO:0000314"/>
    <property type="project" value="SGD"/>
</dbReference>
<dbReference type="GO" id="GO:0005634">
    <property type="term" value="C:nucleus"/>
    <property type="evidence" value="ECO:0000314"/>
    <property type="project" value="SGD"/>
</dbReference>
<dbReference type="GO" id="GO:0033309">
    <property type="term" value="C:SBF transcription complex"/>
    <property type="evidence" value="ECO:0000314"/>
    <property type="project" value="SGD"/>
</dbReference>
<dbReference type="GO" id="GO:0003677">
    <property type="term" value="F:DNA binding"/>
    <property type="evidence" value="ECO:0007669"/>
    <property type="project" value="UniProtKB-KW"/>
</dbReference>
<dbReference type="GO" id="GO:0001228">
    <property type="term" value="F:DNA-binding transcription activator activity, RNA polymerase II-specific"/>
    <property type="evidence" value="ECO:0000318"/>
    <property type="project" value="GO_Central"/>
</dbReference>
<dbReference type="GO" id="GO:0003713">
    <property type="term" value="F:transcription coactivator activity"/>
    <property type="evidence" value="ECO:0000314"/>
    <property type="project" value="SGD"/>
</dbReference>
<dbReference type="GO" id="GO:0034605">
    <property type="term" value="P:cellular response to heat"/>
    <property type="evidence" value="ECO:0000315"/>
    <property type="project" value="SGD"/>
</dbReference>
<dbReference type="GO" id="GO:0000082">
    <property type="term" value="P:G1/S transition of mitotic cell cycle"/>
    <property type="evidence" value="ECO:0000314"/>
    <property type="project" value="ComplexPortal"/>
</dbReference>
<dbReference type="GO" id="GO:0010845">
    <property type="term" value="P:positive regulation of reciprocal meiotic recombination"/>
    <property type="evidence" value="ECO:0000315"/>
    <property type="project" value="SGD"/>
</dbReference>
<dbReference type="GO" id="GO:0045944">
    <property type="term" value="P:positive regulation of transcription by RNA polymerase II"/>
    <property type="evidence" value="ECO:0000314"/>
    <property type="project" value="SGD"/>
</dbReference>
<dbReference type="GO" id="GO:0006355">
    <property type="term" value="P:regulation of DNA-templated transcription"/>
    <property type="evidence" value="ECO:0000315"/>
    <property type="project" value="ComplexPortal"/>
</dbReference>
<dbReference type="FunFam" id="3.10.260.30:FF:000001">
    <property type="entry name" value="Regulatory protein SWI6"/>
    <property type="match status" value="1"/>
</dbReference>
<dbReference type="Gene3D" id="3.10.260.30">
    <property type="match status" value="1"/>
</dbReference>
<dbReference type="Gene3D" id="1.25.40.20">
    <property type="entry name" value="Ankyrin repeat-containing domain"/>
    <property type="match status" value="1"/>
</dbReference>
<dbReference type="InterPro" id="IPR002110">
    <property type="entry name" value="Ankyrin_rpt"/>
</dbReference>
<dbReference type="InterPro" id="IPR036770">
    <property type="entry name" value="Ankyrin_rpt-contain_sf"/>
</dbReference>
<dbReference type="InterPro" id="IPR051642">
    <property type="entry name" value="SWI6-like"/>
</dbReference>
<dbReference type="InterPro" id="IPR040822">
    <property type="entry name" value="Swi6_N"/>
</dbReference>
<dbReference type="PANTHER" id="PTHR43828">
    <property type="entry name" value="ASPARAGINASE"/>
    <property type="match status" value="1"/>
</dbReference>
<dbReference type="PANTHER" id="PTHR43828:SF3">
    <property type="entry name" value="CHROMO DOMAIN-CONTAINING PROTEIN"/>
    <property type="match status" value="1"/>
</dbReference>
<dbReference type="Pfam" id="PF00023">
    <property type="entry name" value="Ank"/>
    <property type="match status" value="2"/>
</dbReference>
<dbReference type="Pfam" id="PF18530">
    <property type="entry name" value="Swi6_N"/>
    <property type="match status" value="1"/>
</dbReference>
<dbReference type="SMART" id="SM00248">
    <property type="entry name" value="ANK"/>
    <property type="match status" value="2"/>
</dbReference>
<dbReference type="SUPFAM" id="SSF48403">
    <property type="entry name" value="Ankyrin repeat"/>
    <property type="match status" value="1"/>
</dbReference>
<dbReference type="PROSITE" id="PS50297">
    <property type="entry name" value="ANK_REP_REGION"/>
    <property type="match status" value="2"/>
</dbReference>
<dbReference type="PROSITE" id="PS50088">
    <property type="entry name" value="ANK_REPEAT"/>
    <property type="match status" value="2"/>
</dbReference>
<reference key="1">
    <citation type="journal article" date="1987" name="Nature">
        <title>Similarity between cell-cycle genes of budding yeast and fission yeast and the Notch gene of Drosophila.</title>
        <authorList>
            <person name="Breeden L."/>
            <person name="Nasmyth K."/>
        </authorList>
    </citation>
    <scope>NUCLEOTIDE SEQUENCE [GENOMIC DNA]</scope>
</reference>
<reference key="2">
    <citation type="journal article" date="1997" name="Nature">
        <title>The nucleotide sequence of Saccharomyces cerevisiae chromosome XII.</title>
        <authorList>
            <person name="Johnston M."/>
            <person name="Hillier L.W."/>
            <person name="Riles L."/>
            <person name="Albermann K."/>
            <person name="Andre B."/>
            <person name="Ansorge W."/>
            <person name="Benes V."/>
            <person name="Brueckner M."/>
            <person name="Delius H."/>
            <person name="Dubois E."/>
            <person name="Duesterhoeft A."/>
            <person name="Entian K.-D."/>
            <person name="Floeth M."/>
            <person name="Goffeau A."/>
            <person name="Hebling U."/>
            <person name="Heumann K."/>
            <person name="Heuss-Neitzel D."/>
            <person name="Hilbert H."/>
            <person name="Hilger F."/>
            <person name="Kleine K."/>
            <person name="Koetter P."/>
            <person name="Louis E.J."/>
            <person name="Messenguy F."/>
            <person name="Mewes H.-W."/>
            <person name="Miosga T."/>
            <person name="Moestl D."/>
            <person name="Mueller-Auer S."/>
            <person name="Nentwich U."/>
            <person name="Obermaier B."/>
            <person name="Piravandi E."/>
            <person name="Pohl T.M."/>
            <person name="Portetelle D."/>
            <person name="Purnelle B."/>
            <person name="Rechmann S."/>
            <person name="Rieger M."/>
            <person name="Rinke M."/>
            <person name="Rose M."/>
            <person name="Scharfe M."/>
            <person name="Scherens B."/>
            <person name="Scholler P."/>
            <person name="Schwager C."/>
            <person name="Schwarz S."/>
            <person name="Underwood A.P."/>
            <person name="Urrestarazu L.A."/>
            <person name="Vandenbol M."/>
            <person name="Verhasselt P."/>
            <person name="Vierendeels F."/>
            <person name="Voet M."/>
            <person name="Volckaert G."/>
            <person name="Voss H."/>
            <person name="Wambutt R."/>
            <person name="Wedler E."/>
            <person name="Wedler H."/>
            <person name="Zimmermann F.K."/>
            <person name="Zollner A."/>
            <person name="Hani J."/>
            <person name="Hoheisel J.D."/>
        </authorList>
    </citation>
    <scope>NUCLEOTIDE SEQUENCE [LARGE SCALE GENOMIC DNA]</scope>
    <source>
        <strain>ATCC 204508 / S288c</strain>
    </source>
</reference>
<reference key="3">
    <citation type="journal article" date="2014" name="G3 (Bethesda)">
        <title>The reference genome sequence of Saccharomyces cerevisiae: Then and now.</title>
        <authorList>
            <person name="Engel S.R."/>
            <person name="Dietrich F.S."/>
            <person name="Fisk D.G."/>
            <person name="Binkley G."/>
            <person name="Balakrishnan R."/>
            <person name="Costanzo M.C."/>
            <person name="Dwight S.S."/>
            <person name="Hitz B.C."/>
            <person name="Karra K."/>
            <person name="Nash R.S."/>
            <person name="Weng S."/>
            <person name="Wong E.D."/>
            <person name="Lloyd P."/>
            <person name="Skrzypek M.S."/>
            <person name="Miyasato S.R."/>
            <person name="Simison M."/>
            <person name="Cherry J.M."/>
        </authorList>
    </citation>
    <scope>GENOME REANNOTATION</scope>
    <source>
        <strain>ATCC 204508 / S288c</strain>
    </source>
</reference>
<reference key="4">
    <citation type="journal article" date="1992" name="Nature">
        <title>A central role for SWI6 in modulating cell cycle Start-specific transcription in yeast.</title>
        <authorList>
            <person name="Dirick L."/>
            <person name="Moll T."/>
            <person name="Auer H."/>
            <person name="Nasmyth K."/>
        </authorList>
    </citation>
    <scope>CHARACTERIZATION</scope>
</reference>
<reference key="5">
    <citation type="journal article" date="1999" name="Mol. Cell. Biol.">
        <title>Regulation of transcription at the Saccharomyces cerevisiae start transition by Stb1, a Swi6-binding protein.</title>
        <authorList>
            <person name="Ho Y."/>
            <person name="Costanzo M."/>
            <person name="Moore L."/>
            <person name="Kobayashi R."/>
            <person name="Andrews B.J."/>
        </authorList>
    </citation>
    <scope>INTERACTION WITH STB1</scope>
</reference>
<reference key="6">
    <citation type="journal article" date="2003" name="Mol. Cell. Biol.">
        <title>Cell cycle activation of the Swi6p transcription factor is linked to nucleocytoplasmic shuttling.</title>
        <authorList>
            <person name="Queralt E."/>
            <person name="Igual J.C."/>
        </authorList>
    </citation>
    <scope>NUCLEOCYTOPLASMIC SHUTTLING</scope>
</reference>
<reference key="7">
    <citation type="journal article" date="2003" name="Nature">
        <title>Global analysis of protein expression in yeast.</title>
        <authorList>
            <person name="Ghaemmaghami S."/>
            <person name="Huh W.-K."/>
            <person name="Bower K."/>
            <person name="Howson R.W."/>
            <person name="Belle A."/>
            <person name="Dephoure N."/>
            <person name="O'Shea E.K."/>
            <person name="Weissman J.S."/>
        </authorList>
    </citation>
    <scope>LEVEL OF PROTEIN EXPRESSION [LARGE SCALE ANALYSIS]</scope>
</reference>
<reference key="8">
    <citation type="journal article" date="2004" name="Mol. Cell. Biol.">
        <title>Clb6/Cdc28 and Cdc14 regulate phosphorylation status and cellular localization of Swi6.</title>
        <authorList>
            <person name="Geymonat M."/>
            <person name="Spanos A."/>
            <person name="Wells G.P."/>
            <person name="Smerdon S.J."/>
            <person name="Sedgwick S.G."/>
        </authorList>
    </citation>
    <scope>PHOSPHORYLATION AT SER-160</scope>
</reference>
<reference key="9">
    <citation type="journal article" date="2007" name="J. Proteome Res.">
        <title>Large-scale phosphorylation analysis of alpha-factor-arrested Saccharomyces cerevisiae.</title>
        <authorList>
            <person name="Li X."/>
            <person name="Gerber S.A."/>
            <person name="Rudner A.D."/>
            <person name="Beausoleil S.A."/>
            <person name="Haas W."/>
            <person name="Villen J."/>
            <person name="Elias J.E."/>
            <person name="Gygi S.P."/>
        </authorList>
    </citation>
    <scope>PHOSPHORYLATION [LARGE SCALE ANALYSIS] AT THR-179 AND THR-182</scope>
    <scope>IDENTIFICATION BY MASS SPECTROMETRY [LARGE SCALE ANALYSIS]</scope>
    <source>
        <strain>ADR376</strain>
    </source>
</reference>
<reference key="10">
    <citation type="journal article" date="2007" name="Proc. Natl. Acad. Sci. U.S.A.">
        <title>Analysis of phosphorylation sites on proteins from Saccharomyces cerevisiae by electron transfer dissociation (ETD) mass spectrometry.</title>
        <authorList>
            <person name="Chi A."/>
            <person name="Huttenhower C."/>
            <person name="Geer L.Y."/>
            <person name="Coon J.J."/>
            <person name="Syka J.E.P."/>
            <person name="Bai D.L."/>
            <person name="Shabanowitz J."/>
            <person name="Burke D.J."/>
            <person name="Troyanskaya O.G."/>
            <person name="Hunt D.F."/>
        </authorList>
    </citation>
    <scope>PHOSPHORYLATION [LARGE SCALE ANALYSIS] AT SER-160 AND SER-547</scope>
    <scope>IDENTIFICATION BY MASS SPECTROMETRY [LARGE SCALE ANALYSIS]</scope>
</reference>
<reference key="11">
    <citation type="journal article" date="2008" name="J. Biol. Chem.">
        <title>The SBF- and MBF-associated protein Msa1 is required for proper timing of G1-specific transcription in Saccharomyces cerevisiae.</title>
        <authorList>
            <person name="Ashe M."/>
            <person name="de Bruin R.A.M."/>
            <person name="Kalashnikova T."/>
            <person name="McDonald W.H."/>
            <person name="Yates J.R. III"/>
            <person name="Wittenberg C."/>
        </authorList>
    </citation>
    <scope>INTERACTION WITH MSA1</scope>
</reference>
<reference key="12">
    <citation type="journal article" date="2008" name="Mol. Cell. Proteomics">
        <title>A multidimensional chromatography technology for in-depth phosphoproteome analysis.</title>
        <authorList>
            <person name="Albuquerque C.P."/>
            <person name="Smolka M.B."/>
            <person name="Payne S.H."/>
            <person name="Bafna V."/>
            <person name="Eng J."/>
            <person name="Zhou H."/>
        </authorList>
    </citation>
    <scope>PHOSPHORYLATION [LARGE SCALE ANALYSIS] AT SER-176</scope>
    <scope>IDENTIFICATION BY MASS SPECTROMETRY [LARGE SCALE ANALYSIS]</scope>
</reference>
<reference key="13">
    <citation type="journal article" date="2009" name="Science">
        <title>Global analysis of Cdk1 substrate phosphorylation sites provides insights into evolution.</title>
        <authorList>
            <person name="Holt L.J."/>
            <person name="Tuch B.B."/>
            <person name="Villen J."/>
            <person name="Johnson A.D."/>
            <person name="Gygi S.P."/>
            <person name="Morgan D.O."/>
        </authorList>
    </citation>
    <scope>PHOSPHORYLATION [LARGE SCALE ANALYSIS] AT SER-149; SER-176; THR-179 AND THR-182</scope>
    <scope>IDENTIFICATION BY MASS SPECTROMETRY [LARGE SCALE ANALYSIS]</scope>
</reference>
<reference key="14">
    <citation type="journal article" date="2012" name="Proc. Natl. Acad. Sci. U.S.A.">
        <title>N-terminal acetylome analyses and functional insights of the N-terminal acetyltransferase NatB.</title>
        <authorList>
            <person name="Van Damme P."/>
            <person name="Lasa M."/>
            <person name="Polevoda B."/>
            <person name="Gazquez C."/>
            <person name="Elosegui-Artola A."/>
            <person name="Kim D.S."/>
            <person name="De Juan-Pardo E."/>
            <person name="Demeyer K."/>
            <person name="Hole K."/>
            <person name="Larrea E."/>
            <person name="Timmerman E."/>
            <person name="Prieto J."/>
            <person name="Arnesen T."/>
            <person name="Sherman F."/>
            <person name="Gevaert K."/>
            <person name="Aldabe R."/>
        </authorList>
    </citation>
    <scope>IDENTIFICATION BY MASS SPECTROMETRY [LARGE SCALE ANALYSIS]</scope>
</reference>
<reference key="15">
    <citation type="journal article" date="1999" name="Nat. Struct. Biol.">
        <title>X-ray structural analysis of the yeast cell cycle regulator Swi6 reveals variations of the ankyrin fold and has implications for Swi6 function.</title>
        <authorList>
            <person name="Foord R."/>
            <person name="Taylor I.A."/>
            <person name="Sedgwick S.G."/>
            <person name="Smerdon S.J."/>
        </authorList>
    </citation>
    <scope>X-RAY CRYSTALLOGRAPHY (2.1 ANGSTROMS) OF 188-514</scope>
</reference>
<keyword id="KW-0002">3D-structure</keyword>
<keyword id="KW-0010">Activator</keyword>
<keyword id="KW-0040">ANK repeat</keyword>
<keyword id="KW-0963">Cytoplasm</keyword>
<keyword id="KW-0238">DNA-binding</keyword>
<keyword id="KW-0539">Nucleus</keyword>
<keyword id="KW-0597">Phosphoprotein</keyword>
<keyword id="KW-1185">Reference proteome</keyword>
<keyword id="KW-0677">Repeat</keyword>
<keyword id="KW-0804">Transcription</keyword>
<keyword id="KW-0805">Transcription regulation</keyword>
<accession>P09959</accession>
<accession>D6VYI6</accession>
<gene>
    <name type="primary">SWI6</name>
    <name type="ordered locus">YLR182W</name>
    <name type="ORF">L9470.8</name>
</gene>
<feature type="chain" id="PRO_0000067071" description="Regulatory protein SWI6">
    <location>
        <begin position="1"/>
        <end position="803"/>
    </location>
</feature>
<feature type="repeat" description="ANK 1">
    <location>
        <begin position="318"/>
        <end position="346"/>
    </location>
</feature>
<feature type="repeat" description="ANK 2">
    <location>
        <begin position="347"/>
        <end position="383"/>
    </location>
</feature>
<feature type="repeat" description="ANK 3">
    <location>
        <begin position="384"/>
        <end position="469"/>
    </location>
</feature>
<feature type="repeat" description="ANK 4">
    <location>
        <begin position="470"/>
        <end position="498"/>
    </location>
</feature>
<feature type="repeat" description="ANK 5">
    <location>
        <begin position="499"/>
        <end position="514"/>
    </location>
</feature>
<feature type="region of interest" description="Disordered" evidence="1">
    <location>
        <begin position="108"/>
        <end position="150"/>
    </location>
</feature>
<feature type="region of interest" description="Disordered" evidence="1">
    <location>
        <begin position="169"/>
        <end position="212"/>
    </location>
</feature>
<feature type="region of interest" description="Disordered" evidence="1">
    <location>
        <begin position="266"/>
        <end position="288"/>
    </location>
</feature>
<feature type="region of interest" description="Disordered" evidence="1">
    <location>
        <begin position="512"/>
        <end position="540"/>
    </location>
</feature>
<feature type="compositionally biased region" description="Acidic residues" evidence="1">
    <location>
        <begin position="108"/>
        <end position="117"/>
    </location>
</feature>
<feature type="compositionally biased region" description="Basic and acidic residues" evidence="1">
    <location>
        <begin position="118"/>
        <end position="138"/>
    </location>
</feature>
<feature type="compositionally biased region" description="Polar residues" evidence="1">
    <location>
        <begin position="139"/>
        <end position="149"/>
    </location>
</feature>
<feature type="compositionally biased region" description="Low complexity" evidence="1">
    <location>
        <begin position="270"/>
        <end position="288"/>
    </location>
</feature>
<feature type="compositionally biased region" description="Polar residues" evidence="1">
    <location>
        <begin position="514"/>
        <end position="523"/>
    </location>
</feature>
<feature type="compositionally biased region" description="Basic and acidic residues" evidence="1">
    <location>
        <begin position="524"/>
        <end position="538"/>
    </location>
</feature>
<feature type="modified residue" description="Phosphoserine" evidence="9">
    <location>
        <position position="149"/>
    </location>
</feature>
<feature type="modified residue" description="Phosphoserine; by CDC28" evidence="4 6">
    <location>
        <position position="160"/>
    </location>
</feature>
<feature type="modified residue" description="Phosphoserine" evidence="8 9">
    <location>
        <position position="176"/>
    </location>
</feature>
<feature type="modified residue" description="Phosphothreonine" evidence="7 9">
    <location>
        <position position="179"/>
    </location>
</feature>
<feature type="modified residue" description="Phosphothreonine" evidence="7 9">
    <location>
        <position position="182"/>
    </location>
</feature>
<feature type="modified residue" description="Phosphoserine" evidence="6">
    <location>
        <position position="547"/>
    </location>
</feature>
<feature type="strand" evidence="11">
    <location>
        <begin position="3"/>
        <end position="11"/>
    </location>
</feature>
<feature type="strand" evidence="11">
    <location>
        <begin position="16"/>
        <end position="23"/>
    </location>
</feature>
<feature type="turn" evidence="11">
    <location>
        <begin position="24"/>
        <end position="26"/>
    </location>
</feature>
<feature type="strand" evidence="11">
    <location>
        <begin position="29"/>
        <end position="31"/>
    </location>
</feature>
<feature type="helix" evidence="11">
    <location>
        <begin position="32"/>
        <end position="34"/>
    </location>
</feature>
<feature type="helix" evidence="11">
    <location>
        <begin position="35"/>
        <end position="44"/>
    </location>
</feature>
<feature type="helix" evidence="11">
    <location>
        <begin position="47"/>
        <end position="49"/>
    </location>
</feature>
<feature type="helix" evidence="11">
    <location>
        <begin position="58"/>
        <end position="68"/>
    </location>
</feature>
<feature type="strand" evidence="11">
    <location>
        <begin position="80"/>
        <end position="82"/>
    </location>
</feature>
<feature type="helix" evidence="11">
    <location>
        <begin position="84"/>
        <end position="93"/>
    </location>
</feature>
<feature type="turn" evidence="11">
    <location>
        <begin position="97"/>
        <end position="100"/>
    </location>
</feature>
<feature type="helix" evidence="11">
    <location>
        <begin position="101"/>
        <end position="103"/>
    </location>
</feature>
<feature type="strand" evidence="11">
    <location>
        <begin position="104"/>
        <end position="106"/>
    </location>
</feature>
<feature type="strand" evidence="10">
    <location>
        <begin position="214"/>
        <end position="216"/>
    </location>
</feature>
<feature type="turn" evidence="10">
    <location>
        <begin position="225"/>
        <end position="227"/>
    </location>
</feature>
<feature type="helix" evidence="10">
    <location>
        <begin position="244"/>
        <end position="258"/>
    </location>
</feature>
<feature type="helix" evidence="10">
    <location>
        <begin position="292"/>
        <end position="302"/>
    </location>
</feature>
<feature type="helix" evidence="10">
    <location>
        <begin position="321"/>
        <end position="327"/>
    </location>
</feature>
<feature type="helix" evidence="10">
    <location>
        <begin position="331"/>
        <end position="339"/>
    </location>
</feature>
<feature type="helix" evidence="10">
    <location>
        <begin position="354"/>
        <end position="360"/>
    </location>
</feature>
<feature type="helix" evidence="10">
    <location>
        <begin position="363"/>
        <end position="366"/>
    </location>
</feature>
<feature type="helix" evidence="10">
    <location>
        <begin position="370"/>
        <end position="377"/>
    </location>
</feature>
<feature type="helix" evidence="10">
    <location>
        <begin position="378"/>
        <end position="382"/>
    </location>
</feature>
<feature type="helix" evidence="10">
    <location>
        <begin position="391"/>
        <end position="399"/>
    </location>
</feature>
<feature type="helix" evidence="10">
    <location>
        <begin position="405"/>
        <end position="421"/>
    </location>
</feature>
<feature type="helix" evidence="10">
    <location>
        <begin position="422"/>
        <end position="424"/>
    </location>
</feature>
<feature type="strand" evidence="10">
    <location>
        <begin position="427"/>
        <end position="429"/>
    </location>
</feature>
<feature type="helix" evidence="10">
    <location>
        <begin position="448"/>
        <end position="452"/>
    </location>
</feature>
<feature type="helix" evidence="10">
    <location>
        <begin position="455"/>
        <end position="461"/>
    </location>
</feature>
<feature type="turn" evidence="10">
    <location>
        <begin position="462"/>
        <end position="464"/>
    </location>
</feature>
<feature type="helix" evidence="10">
    <location>
        <begin position="473"/>
        <end position="480"/>
    </location>
</feature>
<feature type="helix" evidence="10">
    <location>
        <begin position="483"/>
        <end position="491"/>
    </location>
</feature>
<feature type="helix" evidence="10">
    <location>
        <begin position="506"/>
        <end position="509"/>
    </location>
</feature>